<gene>
    <name type="primary">tfxD</name>
</gene>
<dbReference type="EMBL" id="L06719">
    <property type="protein sequence ID" value="AAA26366.1"/>
    <property type="molecule type" value="Genomic_DNA"/>
</dbReference>
<dbReference type="PIR" id="D47116">
    <property type="entry name" value="D47116"/>
</dbReference>
<dbReference type="GO" id="GO:0005886">
    <property type="term" value="C:plasma membrane"/>
    <property type="evidence" value="ECO:0007669"/>
    <property type="project" value="UniProtKB-SubCell"/>
</dbReference>
<accession>P42726</accession>
<sequence length="416" mass="44866">MSDENQHGFYRTSFEYASISWRRMIPNVADTIVVTLIGATALQVASNVLITILTLNIAFLNFCSLICMHNLKRGAKADVFAAIVRAACMMIGVYLALIAVSVATLEGAPRTQTIAFIALSALRPFVAGWNAYCAEVFFAQGKRQIVRSVITRSSLIYAGVNLLFVGLSHFAGTQNSIISLLIGVYLALFHNALAYARILPTEWRFSRQDLKDVFSLRKLDLVGIGAGLSASFINMLEMGFLALVGWVVAAKFPQIAVFYFPFFTLVELTSGLAIGLGRSVTERLITPRPFPRLHVLIAVYSTYSLLCFLIYVGLIGVSNRDIFALPLSLAGLALLFLICDGLQLVVRGYTLAKADGGKLTHLSAIAYLASGVILALAAVLGSVQALAIALVLGPLFLAISIPAVQSRTALNALPNR</sequence>
<proteinExistence type="predicted"/>
<reference key="1">
    <citation type="journal article" date="1993" name="J. Bacteriol.">
        <title>DNA sequence and mutational analysis of genes involved in the production and resistance of the antibiotic peptide trifolitoxin.</title>
        <authorList>
            <person name="Breil B.T."/>
            <person name="Ludden P.W."/>
            <person name="Triplett E.W."/>
        </authorList>
    </citation>
    <scope>NUCLEOTIDE SEQUENCE [GENOMIC DNA]</scope>
    <source>
        <strain>T24</strain>
    </source>
</reference>
<protein>
    <recommendedName>
        <fullName>Trifolitoxin-processing protein TfxD</fullName>
    </recommendedName>
</protein>
<comment type="function">
    <text>The actions of the proteins TfxB, TfxD and TfxF are implicated in the processing of the inactive trifolitoxin (TfxA) precursor into the active peptide.</text>
</comment>
<comment type="subcellular location">
    <subcellularLocation>
        <location evidence="2">Cell membrane</location>
        <topology evidence="2">Multi-pass membrane protein</topology>
    </subcellularLocation>
</comment>
<name>TFXD_RHILT</name>
<feature type="chain" id="PRO_0000072506" description="Trifolitoxin-processing protein TfxD">
    <location>
        <begin position="1"/>
        <end position="416"/>
    </location>
</feature>
<feature type="transmembrane region" description="Helical" evidence="1">
    <location>
        <begin position="24"/>
        <end position="44"/>
    </location>
</feature>
<feature type="transmembrane region" description="Helical" evidence="1">
    <location>
        <begin position="48"/>
        <end position="68"/>
    </location>
</feature>
<feature type="transmembrane region" description="Helical" evidence="1">
    <location>
        <begin position="79"/>
        <end position="99"/>
    </location>
</feature>
<feature type="transmembrane region" description="Helical" evidence="1">
    <location>
        <begin position="114"/>
        <end position="134"/>
    </location>
</feature>
<feature type="transmembrane region" description="Helical" evidence="1">
    <location>
        <begin position="153"/>
        <end position="173"/>
    </location>
</feature>
<feature type="transmembrane region" description="Helical" evidence="1">
    <location>
        <begin position="176"/>
        <end position="196"/>
    </location>
</feature>
<feature type="transmembrane region" description="Helical" evidence="1">
    <location>
        <begin position="230"/>
        <end position="250"/>
    </location>
</feature>
<feature type="transmembrane region" description="Helical" evidence="1">
    <location>
        <begin position="255"/>
        <end position="275"/>
    </location>
</feature>
<feature type="transmembrane region" description="Helical" evidence="1">
    <location>
        <begin position="295"/>
        <end position="315"/>
    </location>
</feature>
<feature type="transmembrane region" description="Helical" evidence="1">
    <location>
        <begin position="322"/>
        <end position="342"/>
    </location>
</feature>
<feature type="transmembrane region" description="Helical" evidence="1">
    <location>
        <begin position="372"/>
        <end position="392"/>
    </location>
</feature>
<organism>
    <name type="scientific">Rhizobium leguminosarum bv. trifolii</name>
    <dbReference type="NCBI Taxonomy" id="386"/>
    <lineage>
        <taxon>Bacteria</taxon>
        <taxon>Pseudomonadati</taxon>
        <taxon>Pseudomonadota</taxon>
        <taxon>Alphaproteobacteria</taxon>
        <taxon>Hyphomicrobiales</taxon>
        <taxon>Rhizobiaceae</taxon>
        <taxon>Rhizobium/Agrobacterium group</taxon>
        <taxon>Rhizobium</taxon>
    </lineage>
</organism>
<evidence type="ECO:0000255" key="1"/>
<evidence type="ECO:0000305" key="2"/>
<keyword id="KW-1003">Cell membrane</keyword>
<keyword id="KW-0472">Membrane</keyword>
<keyword id="KW-0812">Transmembrane</keyword>
<keyword id="KW-1133">Transmembrane helix</keyword>